<proteinExistence type="inferred from homology"/>
<name>MURQ_RUBXD</name>
<dbReference type="EC" id="4.2.1.126" evidence="1"/>
<dbReference type="EMBL" id="CP000386">
    <property type="protein sequence ID" value="ABG03591.1"/>
    <property type="molecule type" value="Genomic_DNA"/>
</dbReference>
<dbReference type="RefSeq" id="WP_011563609.1">
    <property type="nucleotide sequence ID" value="NC_008148.1"/>
</dbReference>
<dbReference type="SMR" id="Q1AYD7"/>
<dbReference type="STRING" id="266117.Rxyl_0620"/>
<dbReference type="KEGG" id="rxy:Rxyl_0620"/>
<dbReference type="eggNOG" id="COG2103">
    <property type="taxonomic scope" value="Bacteria"/>
</dbReference>
<dbReference type="HOGENOM" id="CLU_049049_1_1_11"/>
<dbReference type="OrthoDB" id="9813395at2"/>
<dbReference type="PhylomeDB" id="Q1AYD7"/>
<dbReference type="UniPathway" id="UPA00342"/>
<dbReference type="Proteomes" id="UP000006637">
    <property type="component" value="Chromosome"/>
</dbReference>
<dbReference type="GO" id="GO:0005829">
    <property type="term" value="C:cytosol"/>
    <property type="evidence" value="ECO:0007669"/>
    <property type="project" value="TreeGrafter"/>
</dbReference>
<dbReference type="GO" id="GO:0030246">
    <property type="term" value="F:carbohydrate binding"/>
    <property type="evidence" value="ECO:0007669"/>
    <property type="project" value="TreeGrafter"/>
</dbReference>
<dbReference type="GO" id="GO:0016835">
    <property type="term" value="F:carbon-oxygen lyase activity"/>
    <property type="evidence" value="ECO:0007669"/>
    <property type="project" value="UniProtKB-UniRule"/>
</dbReference>
<dbReference type="GO" id="GO:0019899">
    <property type="term" value="F:enzyme binding"/>
    <property type="evidence" value="ECO:0007669"/>
    <property type="project" value="TreeGrafter"/>
</dbReference>
<dbReference type="GO" id="GO:0004857">
    <property type="term" value="F:enzyme inhibitor activity"/>
    <property type="evidence" value="ECO:0007669"/>
    <property type="project" value="TreeGrafter"/>
</dbReference>
<dbReference type="GO" id="GO:0070095">
    <property type="term" value="F:fructose-6-phosphate binding"/>
    <property type="evidence" value="ECO:0007669"/>
    <property type="project" value="TreeGrafter"/>
</dbReference>
<dbReference type="GO" id="GO:0046348">
    <property type="term" value="P:amino sugar catabolic process"/>
    <property type="evidence" value="ECO:0007669"/>
    <property type="project" value="InterPro"/>
</dbReference>
<dbReference type="GO" id="GO:0042593">
    <property type="term" value="P:glucose homeostasis"/>
    <property type="evidence" value="ECO:0007669"/>
    <property type="project" value="TreeGrafter"/>
</dbReference>
<dbReference type="GO" id="GO:0097173">
    <property type="term" value="P:N-acetylmuramic acid catabolic process"/>
    <property type="evidence" value="ECO:0007669"/>
    <property type="project" value="UniProtKB-UniPathway"/>
</dbReference>
<dbReference type="GO" id="GO:0009750">
    <property type="term" value="P:response to fructose"/>
    <property type="evidence" value="ECO:0007669"/>
    <property type="project" value="TreeGrafter"/>
</dbReference>
<dbReference type="CDD" id="cd05007">
    <property type="entry name" value="SIS_Etherase"/>
    <property type="match status" value="1"/>
</dbReference>
<dbReference type="FunFam" id="3.40.50.10490:FF:000014">
    <property type="entry name" value="N-acetylmuramic acid 6-phosphate etherase"/>
    <property type="match status" value="1"/>
</dbReference>
<dbReference type="Gene3D" id="1.10.8.1080">
    <property type="match status" value="1"/>
</dbReference>
<dbReference type="Gene3D" id="3.40.50.10490">
    <property type="entry name" value="Glucose-6-phosphate isomerase like protein, domain 1"/>
    <property type="match status" value="1"/>
</dbReference>
<dbReference type="HAMAP" id="MF_00068">
    <property type="entry name" value="MurQ"/>
    <property type="match status" value="1"/>
</dbReference>
<dbReference type="InterPro" id="IPR005488">
    <property type="entry name" value="Etherase_MurQ"/>
</dbReference>
<dbReference type="InterPro" id="IPR005486">
    <property type="entry name" value="Glucokinase_regulatory_CS"/>
</dbReference>
<dbReference type="InterPro" id="IPR040190">
    <property type="entry name" value="MURQ/GCKR"/>
</dbReference>
<dbReference type="InterPro" id="IPR001347">
    <property type="entry name" value="SIS_dom"/>
</dbReference>
<dbReference type="InterPro" id="IPR046348">
    <property type="entry name" value="SIS_dom_sf"/>
</dbReference>
<dbReference type="NCBIfam" id="TIGR00274">
    <property type="entry name" value="N-acetylmuramic acid 6-phosphate etherase"/>
    <property type="match status" value="1"/>
</dbReference>
<dbReference type="NCBIfam" id="NF003915">
    <property type="entry name" value="PRK05441.1"/>
    <property type="match status" value="1"/>
</dbReference>
<dbReference type="NCBIfam" id="NF009222">
    <property type="entry name" value="PRK12570.1"/>
    <property type="match status" value="1"/>
</dbReference>
<dbReference type="PANTHER" id="PTHR10088">
    <property type="entry name" value="GLUCOKINASE REGULATORY PROTEIN"/>
    <property type="match status" value="1"/>
</dbReference>
<dbReference type="PANTHER" id="PTHR10088:SF4">
    <property type="entry name" value="GLUCOKINASE REGULATORY PROTEIN"/>
    <property type="match status" value="1"/>
</dbReference>
<dbReference type="Pfam" id="PF22645">
    <property type="entry name" value="GKRP_SIS_N"/>
    <property type="match status" value="1"/>
</dbReference>
<dbReference type="SUPFAM" id="SSF53697">
    <property type="entry name" value="SIS domain"/>
    <property type="match status" value="1"/>
</dbReference>
<dbReference type="PROSITE" id="PS01272">
    <property type="entry name" value="GCKR"/>
    <property type="match status" value="1"/>
</dbReference>
<dbReference type="PROSITE" id="PS51464">
    <property type="entry name" value="SIS"/>
    <property type="match status" value="1"/>
</dbReference>
<feature type="chain" id="PRO_1000202432" description="N-acetylmuramic acid 6-phosphate etherase">
    <location>
        <begin position="1"/>
        <end position="301"/>
    </location>
</feature>
<feature type="domain" description="SIS" evidence="1">
    <location>
        <begin position="57"/>
        <end position="220"/>
    </location>
</feature>
<feature type="active site" description="Proton donor" evidence="1">
    <location>
        <position position="85"/>
    </location>
</feature>
<feature type="active site" evidence="1">
    <location>
        <position position="116"/>
    </location>
</feature>
<keyword id="KW-0119">Carbohydrate metabolism</keyword>
<keyword id="KW-0456">Lyase</keyword>
<keyword id="KW-1185">Reference proteome</keyword>
<comment type="function">
    <text evidence="1">Specifically catalyzes the cleavage of the D-lactyl ether substituent of MurNAc 6-phosphate, producing GlcNAc 6-phosphate and D-lactate.</text>
</comment>
<comment type="catalytic activity">
    <reaction evidence="1">
        <text>N-acetyl-D-muramate 6-phosphate + H2O = N-acetyl-D-glucosamine 6-phosphate + (R)-lactate</text>
        <dbReference type="Rhea" id="RHEA:26410"/>
        <dbReference type="ChEBI" id="CHEBI:15377"/>
        <dbReference type="ChEBI" id="CHEBI:16004"/>
        <dbReference type="ChEBI" id="CHEBI:57513"/>
        <dbReference type="ChEBI" id="CHEBI:58722"/>
        <dbReference type="EC" id="4.2.1.126"/>
    </reaction>
</comment>
<comment type="pathway">
    <text evidence="1">Amino-sugar metabolism; N-acetylmuramate degradation.</text>
</comment>
<comment type="subunit">
    <text evidence="1">Homodimer.</text>
</comment>
<comment type="miscellaneous">
    <text evidence="1">A lyase-type mechanism (elimination/hydration) is suggested for the cleavage of the lactyl ether bond of MurNAc 6-phosphate, with the formation of an alpha,beta-unsaturated aldehyde intermediate with (E)-stereochemistry, followed by the syn addition of water to give product.</text>
</comment>
<comment type="similarity">
    <text evidence="1">Belongs to the GCKR-like family. MurNAc-6-P etherase subfamily.</text>
</comment>
<protein>
    <recommendedName>
        <fullName evidence="1">N-acetylmuramic acid 6-phosphate etherase</fullName>
        <shortName evidence="1">MurNAc-6-P etherase</shortName>
        <ecNumber evidence="1">4.2.1.126</ecNumber>
    </recommendedName>
    <alternativeName>
        <fullName evidence="1">N-acetylmuramic acid 6-phosphate hydrolase</fullName>
    </alternativeName>
    <alternativeName>
        <fullName evidence="1">N-acetylmuramic acid 6-phosphate lyase</fullName>
    </alternativeName>
</protein>
<sequence>MDERLGELVTERRSPDSAELDRMGTGELVRLMAREEARVPEAVARQAPRMAAAIDAVVERLRAGGRLIYVGAGTAGRVGVLDAVECGPTFGVPPGRVVGVIAGGREAMFDPRESAEDSAEAGASDLDRLCVGPEDAVVGVSASGRTPYTLGAVRRARERGALTVGLSCNPGSRLSDIVDHPLEVVVGPEVLAGSTRLKAGSAQKLVLNMISTISMVRLGKTYGNLMVDVRASNAKLRDRARRIVELATGAPPEEAAAALDRCGGEAKVAIVALLLGVGPDEARRRLAAGSVRAALGEGRRP</sequence>
<accession>Q1AYD7</accession>
<gene>
    <name evidence="1" type="primary">murQ</name>
    <name type="ordered locus">Rxyl_0620</name>
</gene>
<organism>
    <name type="scientific">Rubrobacter xylanophilus (strain DSM 9941 / JCM 11954 / NBRC 16129 / PRD-1)</name>
    <dbReference type="NCBI Taxonomy" id="266117"/>
    <lineage>
        <taxon>Bacteria</taxon>
        <taxon>Bacillati</taxon>
        <taxon>Actinomycetota</taxon>
        <taxon>Rubrobacteria</taxon>
        <taxon>Rubrobacterales</taxon>
        <taxon>Rubrobacteraceae</taxon>
        <taxon>Rubrobacter</taxon>
    </lineage>
</organism>
<reference key="1">
    <citation type="submission" date="2006-06" db="EMBL/GenBank/DDBJ databases">
        <title>Complete sequence of Rubrobacter xylanophilus DSM 9941.</title>
        <authorList>
            <consortium name="US DOE Joint Genome Institute"/>
            <person name="Copeland A."/>
            <person name="Lucas S."/>
            <person name="Lapidus A."/>
            <person name="Barry K."/>
            <person name="Detter J.C."/>
            <person name="Glavina del Rio T."/>
            <person name="Hammon N."/>
            <person name="Israni S."/>
            <person name="Dalin E."/>
            <person name="Tice H."/>
            <person name="Pitluck S."/>
            <person name="Munk A.C."/>
            <person name="Brettin T."/>
            <person name="Bruce D."/>
            <person name="Han C."/>
            <person name="Tapia R."/>
            <person name="Gilna P."/>
            <person name="Schmutz J."/>
            <person name="Larimer F."/>
            <person name="Land M."/>
            <person name="Hauser L."/>
            <person name="Kyrpides N."/>
            <person name="Lykidis A."/>
            <person name="da Costa M.S."/>
            <person name="Rainey F.A."/>
            <person name="Empadinhas N."/>
            <person name="Jolivet E."/>
            <person name="Battista J.R."/>
            <person name="Richardson P."/>
        </authorList>
    </citation>
    <scope>NUCLEOTIDE SEQUENCE [LARGE SCALE GENOMIC DNA]</scope>
    <source>
        <strain>DSM 9941 / JCM 11954 / NBRC 16129 / PRD-1</strain>
    </source>
</reference>
<evidence type="ECO:0000255" key="1">
    <source>
        <dbReference type="HAMAP-Rule" id="MF_00068"/>
    </source>
</evidence>